<organism>
    <name type="scientific">Citrobacter koseri (strain ATCC BAA-895 / CDC 4225-83 / SGSC4696)</name>
    <dbReference type="NCBI Taxonomy" id="290338"/>
    <lineage>
        <taxon>Bacteria</taxon>
        <taxon>Pseudomonadati</taxon>
        <taxon>Pseudomonadota</taxon>
        <taxon>Gammaproteobacteria</taxon>
        <taxon>Enterobacterales</taxon>
        <taxon>Enterobacteriaceae</taxon>
        <taxon>Citrobacter</taxon>
    </lineage>
</organism>
<protein>
    <recommendedName>
        <fullName evidence="1">Alkanesulfonate monooxygenase</fullName>
        <ecNumber evidence="1">1.14.14.5</ecNumber>
    </recommendedName>
    <alternativeName>
        <fullName evidence="1">FMNH2-dependent aliphatic sulfonate monooxygenase</fullName>
    </alternativeName>
</protein>
<evidence type="ECO:0000255" key="1">
    <source>
        <dbReference type="HAMAP-Rule" id="MF_01229"/>
    </source>
</evidence>
<keyword id="KW-0285">Flavoprotein</keyword>
<keyword id="KW-0288">FMN</keyword>
<keyword id="KW-0503">Monooxygenase</keyword>
<keyword id="KW-0560">Oxidoreductase</keyword>
<keyword id="KW-1185">Reference proteome</keyword>
<feature type="chain" id="PRO_1000066818" description="Alkanesulfonate monooxygenase">
    <location>
        <begin position="1"/>
        <end position="381"/>
    </location>
</feature>
<reference key="1">
    <citation type="submission" date="2007-08" db="EMBL/GenBank/DDBJ databases">
        <authorList>
            <consortium name="The Citrobacter koseri Genome Sequencing Project"/>
            <person name="McClelland M."/>
            <person name="Sanderson E.K."/>
            <person name="Porwollik S."/>
            <person name="Spieth J."/>
            <person name="Clifton W.S."/>
            <person name="Latreille P."/>
            <person name="Courtney L."/>
            <person name="Wang C."/>
            <person name="Pepin K."/>
            <person name="Bhonagiri V."/>
            <person name="Nash W."/>
            <person name="Johnson M."/>
            <person name="Thiruvilangam P."/>
            <person name="Wilson R."/>
        </authorList>
    </citation>
    <scope>NUCLEOTIDE SEQUENCE [LARGE SCALE GENOMIC DNA]</scope>
    <source>
        <strain>ATCC BAA-895 / CDC 4225-83 / SGSC4696</strain>
    </source>
</reference>
<name>SSUD_CITK8</name>
<accession>A8AID7</accession>
<sequence>MSLNMFWFLPTHGDGHYLGTEAGSRPVDHGYLQQIAQTADRLGFTGVLIPTGRSCEDAWLVAASMIPVTQRLKFLVALRPSVTSPTVAARQAATLDRLSNGRALFNLVTGSDPQELAGDGVFLDHTERYEASSEFTQVWRRLLQGETVDFNGKHIHVRGAKLFFPAIQQPYPPLYFGGSSDVAQDLAAEQVDLYLTWGEPPAQVKEKIEQVRAKAAARGRKIRFGIRLHVIVRETNEEAWRAADRLIAHLDDDTIAKAQAAFARTDSVGQHRMAALHNGKRDQLEISPNLWAGVGLVRGGAGTALVGDGPTVAARINEYAALGIDSFVLSGYPHLEEAYNVGELLFPHLDVAIPEIPQPQPLHQQGEAVANEFIPRKAAQS</sequence>
<comment type="function">
    <text evidence="1">Catalyzes the desulfonation of aliphatic sulfonates.</text>
</comment>
<comment type="catalytic activity">
    <reaction evidence="1">
        <text>an alkanesulfonate + FMNH2 + O2 = an aldehyde + FMN + sulfite + H2O + 2 H(+)</text>
        <dbReference type="Rhea" id="RHEA:23064"/>
        <dbReference type="ChEBI" id="CHEBI:15377"/>
        <dbReference type="ChEBI" id="CHEBI:15378"/>
        <dbReference type="ChEBI" id="CHEBI:15379"/>
        <dbReference type="ChEBI" id="CHEBI:17359"/>
        <dbReference type="ChEBI" id="CHEBI:17478"/>
        <dbReference type="ChEBI" id="CHEBI:57618"/>
        <dbReference type="ChEBI" id="CHEBI:58210"/>
        <dbReference type="ChEBI" id="CHEBI:134249"/>
        <dbReference type="EC" id="1.14.14.5"/>
    </reaction>
</comment>
<comment type="subunit">
    <text evidence="1">Homotetramer.</text>
</comment>
<comment type="miscellaneous">
    <text evidence="1">FMNH(2) which is absolutely required for this enzymatic reaction, is provided by SsuE.</text>
</comment>
<comment type="similarity">
    <text evidence="1">Belongs to the SsuD family.</text>
</comment>
<proteinExistence type="inferred from homology"/>
<dbReference type="EC" id="1.14.14.5" evidence="1"/>
<dbReference type="EMBL" id="CP000822">
    <property type="protein sequence ID" value="ABV13250.1"/>
    <property type="molecule type" value="Genomic_DNA"/>
</dbReference>
<dbReference type="RefSeq" id="WP_012132982.1">
    <property type="nucleotide sequence ID" value="NC_009792.1"/>
</dbReference>
<dbReference type="SMR" id="A8AID7"/>
<dbReference type="STRING" id="290338.CKO_02126"/>
<dbReference type="GeneID" id="45136073"/>
<dbReference type="KEGG" id="cko:CKO_02126"/>
<dbReference type="HOGENOM" id="CLU_027853_1_0_6"/>
<dbReference type="OrthoDB" id="9814695at2"/>
<dbReference type="Proteomes" id="UP000008148">
    <property type="component" value="Chromosome"/>
</dbReference>
<dbReference type="GO" id="GO:0008726">
    <property type="term" value="F:alkanesulfonate monooxygenase activity"/>
    <property type="evidence" value="ECO:0007669"/>
    <property type="project" value="UniProtKB-UniRule"/>
</dbReference>
<dbReference type="GO" id="GO:0046306">
    <property type="term" value="P:alkanesulfonate catabolic process"/>
    <property type="evidence" value="ECO:0007669"/>
    <property type="project" value="TreeGrafter"/>
</dbReference>
<dbReference type="CDD" id="cd01094">
    <property type="entry name" value="Alkanesulfonate_monoxygenase"/>
    <property type="match status" value="1"/>
</dbReference>
<dbReference type="FunFam" id="3.20.20.30:FF:000001">
    <property type="entry name" value="Alkanesulfonate monooxygenase"/>
    <property type="match status" value="1"/>
</dbReference>
<dbReference type="Gene3D" id="3.20.20.30">
    <property type="entry name" value="Luciferase-like domain"/>
    <property type="match status" value="1"/>
</dbReference>
<dbReference type="HAMAP" id="MF_01229">
    <property type="entry name" value="Alkanesulf_monooxygen"/>
    <property type="match status" value="1"/>
</dbReference>
<dbReference type="InterPro" id="IPR019911">
    <property type="entry name" value="Alkanesulphonate_mOase_FMN-dep"/>
</dbReference>
<dbReference type="InterPro" id="IPR011251">
    <property type="entry name" value="Luciferase-like_dom"/>
</dbReference>
<dbReference type="InterPro" id="IPR036661">
    <property type="entry name" value="Luciferase-like_sf"/>
</dbReference>
<dbReference type="InterPro" id="IPR050172">
    <property type="entry name" value="SsuD_RutA_monooxygenase"/>
</dbReference>
<dbReference type="NCBIfam" id="TIGR03565">
    <property type="entry name" value="alk_sulf_monoox"/>
    <property type="match status" value="1"/>
</dbReference>
<dbReference type="NCBIfam" id="NF001939">
    <property type="entry name" value="PRK00719.1"/>
    <property type="match status" value="1"/>
</dbReference>
<dbReference type="PANTHER" id="PTHR42847">
    <property type="entry name" value="ALKANESULFONATE MONOOXYGENASE"/>
    <property type="match status" value="1"/>
</dbReference>
<dbReference type="PANTHER" id="PTHR42847:SF4">
    <property type="entry name" value="ALKANESULFONATE MONOOXYGENASE-RELATED"/>
    <property type="match status" value="1"/>
</dbReference>
<dbReference type="Pfam" id="PF00296">
    <property type="entry name" value="Bac_luciferase"/>
    <property type="match status" value="1"/>
</dbReference>
<dbReference type="SUPFAM" id="SSF51679">
    <property type="entry name" value="Bacterial luciferase-like"/>
    <property type="match status" value="1"/>
</dbReference>
<gene>
    <name evidence="1" type="primary">ssuD</name>
    <name type="ordered locus">CKO_02126</name>
</gene>